<proteinExistence type="evidence at protein level"/>
<organism>
    <name type="scientific">Tetrahymena thermophila (strain SB210)</name>
    <dbReference type="NCBI Taxonomy" id="312017"/>
    <lineage>
        <taxon>Eukaryota</taxon>
        <taxon>Sar</taxon>
        <taxon>Alveolata</taxon>
        <taxon>Ciliophora</taxon>
        <taxon>Intramacronucleata</taxon>
        <taxon>Oligohymenophorea</taxon>
        <taxon>Hymenostomatida</taxon>
        <taxon>Tetrahymenina</taxon>
        <taxon>Tetrahymenidae</taxon>
        <taxon>Tetrahymena</taxon>
    </lineage>
</organism>
<name>LARP7_TETTS</name>
<evidence type="ECO:0000255" key="1">
    <source>
        <dbReference type="PROSITE-ProRule" id="PRU00176"/>
    </source>
</evidence>
<evidence type="ECO:0000255" key="2">
    <source>
        <dbReference type="PROSITE-ProRule" id="PRU00332"/>
    </source>
</evidence>
<evidence type="ECO:0000255" key="3">
    <source>
        <dbReference type="PROSITE-ProRule" id="PRU01288"/>
    </source>
</evidence>
<evidence type="ECO:0000269" key="4">
    <source>
    </source>
</evidence>
<evidence type="ECO:0000269" key="5">
    <source>
    </source>
</evidence>
<evidence type="ECO:0000269" key="6">
    <source>
    </source>
</evidence>
<evidence type="ECO:0000269" key="7">
    <source>
    </source>
</evidence>
<evidence type="ECO:0000269" key="8">
    <source>
    </source>
</evidence>
<evidence type="ECO:0000269" key="9">
    <source>
    </source>
</evidence>
<evidence type="ECO:0000269" key="10">
    <source>
    </source>
</evidence>
<evidence type="ECO:0000269" key="11">
    <source>
    </source>
</evidence>
<evidence type="ECO:0000269" key="12">
    <source>
    </source>
</evidence>
<evidence type="ECO:0000269" key="13">
    <source>
    </source>
</evidence>
<evidence type="ECO:0000269" key="14">
    <source>
    </source>
</evidence>
<evidence type="ECO:0000303" key="15">
    <source>
    </source>
</evidence>
<evidence type="ECO:0000305" key="16"/>
<evidence type="ECO:0000305" key="17">
    <source>
    </source>
</evidence>
<evidence type="ECO:0000312" key="18">
    <source>
        <dbReference type="EMBL" id="EWS73087.1"/>
    </source>
</evidence>
<evidence type="ECO:0007744" key="19">
    <source>
        <dbReference type="PDB" id="2LSL"/>
    </source>
</evidence>
<evidence type="ECO:0007744" key="20">
    <source>
        <dbReference type="PDB" id="4ERD"/>
    </source>
</evidence>
<evidence type="ECO:0007744" key="21">
    <source>
        <dbReference type="PDB" id="4EYT"/>
    </source>
</evidence>
<evidence type="ECO:0007744" key="22">
    <source>
        <dbReference type="PDB" id="6D6V"/>
    </source>
</evidence>
<evidence type="ECO:0007829" key="23">
    <source>
        <dbReference type="PDB" id="2LSL"/>
    </source>
</evidence>
<evidence type="ECO:0007829" key="24">
    <source>
        <dbReference type="PDB" id="4EYT"/>
    </source>
</evidence>
<evidence type="ECO:0007829" key="25">
    <source>
        <dbReference type="PDB" id="7UY6"/>
    </source>
</evidence>
<protein>
    <recommendedName>
        <fullName evidence="16">La-related protein 7 homolog</fullName>
    </recommendedName>
    <alternativeName>
        <fullName evidence="15">Telomerase-associated protein of 65 kDa</fullName>
        <shortName evidence="15">p65</shortName>
    </alternativeName>
</protein>
<dbReference type="EMBL" id="AY280524">
    <property type="protein sequence ID" value="AAQ21362.1"/>
    <property type="molecule type" value="Genomic_DNA"/>
</dbReference>
<dbReference type="EMBL" id="GG662605">
    <property type="protein sequence ID" value="EWS73087.1"/>
    <property type="molecule type" value="Genomic_DNA"/>
</dbReference>
<dbReference type="RefSeq" id="XP_012654396.1">
    <property type="nucleotide sequence ID" value="XM_012798942.1"/>
</dbReference>
<dbReference type="PDB" id="2LSL">
    <property type="method" value="NMR"/>
    <property type="chains" value="A=369-519"/>
</dbReference>
<dbReference type="PDB" id="4ERD">
    <property type="method" value="X-ray"/>
    <property type="resolution" value="2.59 A"/>
    <property type="chains" value="A/B=375-542"/>
</dbReference>
<dbReference type="PDB" id="4EYT">
    <property type="method" value="X-ray"/>
    <property type="resolution" value="2.50 A"/>
    <property type="chains" value="A/B/C/D/E/F=375-542"/>
</dbReference>
<dbReference type="PDB" id="6D6V">
    <property type="method" value="EM"/>
    <property type="resolution" value="4.80 A"/>
    <property type="chains" value="H=1-542"/>
</dbReference>
<dbReference type="PDB" id="7LMA">
    <property type="method" value="EM"/>
    <property type="resolution" value="3.30 A"/>
    <property type="chains" value="H=1-542"/>
</dbReference>
<dbReference type="PDB" id="7LMB">
    <property type="method" value="EM"/>
    <property type="resolution" value="3.80 A"/>
    <property type="chains" value="H=1-542"/>
</dbReference>
<dbReference type="PDB" id="7UY5">
    <property type="method" value="EM"/>
    <property type="resolution" value="3.50 A"/>
    <property type="chains" value="H=1-542"/>
</dbReference>
<dbReference type="PDB" id="7UY6">
    <property type="method" value="EM"/>
    <property type="resolution" value="2.90 A"/>
    <property type="chains" value="H=1-542"/>
</dbReference>
<dbReference type="PDB" id="8GAP">
    <property type="method" value="EM"/>
    <property type="resolution" value="3.80 A"/>
    <property type="chains" value="H=1-542"/>
</dbReference>
<dbReference type="PDBsum" id="2LSL"/>
<dbReference type="PDBsum" id="4ERD"/>
<dbReference type="PDBsum" id="4EYT"/>
<dbReference type="PDBsum" id="6D6V"/>
<dbReference type="PDBsum" id="7LMA"/>
<dbReference type="PDBsum" id="7LMB"/>
<dbReference type="PDBsum" id="7UY5"/>
<dbReference type="PDBsum" id="7UY6"/>
<dbReference type="PDBsum" id="8GAP"/>
<dbReference type="EMDB" id="EMD-23437"/>
<dbReference type="EMDB" id="EMD-23439"/>
<dbReference type="EMDB" id="EMD-26863"/>
<dbReference type="EMDB" id="EMD-26865"/>
<dbReference type="EMDB" id="EMD-29903"/>
<dbReference type="EMDB" id="EMD-7821"/>
<dbReference type="SMR" id="W7X6T2"/>
<dbReference type="DIP" id="DIP-60203N"/>
<dbReference type="DIP" id="DIP-61864N"/>
<dbReference type="IntAct" id="W7X6T2">
    <property type="interactions" value="8"/>
</dbReference>
<dbReference type="STRING" id="312017.W7X6T2"/>
<dbReference type="GeneID" id="24438417"/>
<dbReference type="KEGG" id="tet:TTHERM_000318539"/>
<dbReference type="eggNOG" id="KOG0118">
    <property type="taxonomic scope" value="Eukaryota"/>
</dbReference>
<dbReference type="eggNOG" id="KOG3525">
    <property type="taxonomic scope" value="Eukaryota"/>
</dbReference>
<dbReference type="InParanoid" id="W7X6T2"/>
<dbReference type="OrthoDB" id="439993at2759"/>
<dbReference type="EvolutionaryTrace" id="W7X6T2"/>
<dbReference type="Proteomes" id="UP000009168">
    <property type="component" value="Unassembled WGS sequence"/>
</dbReference>
<dbReference type="GO" id="GO:0000781">
    <property type="term" value="C:chromosome, telomeric region"/>
    <property type="evidence" value="ECO:0007669"/>
    <property type="project" value="UniProtKB-SubCell"/>
</dbReference>
<dbReference type="GO" id="GO:0005697">
    <property type="term" value="C:telomerase holoenzyme complex"/>
    <property type="evidence" value="ECO:0000314"/>
    <property type="project" value="UniProtKB"/>
</dbReference>
<dbReference type="GO" id="GO:0070034">
    <property type="term" value="F:telomerase RNA binding"/>
    <property type="evidence" value="ECO:0000314"/>
    <property type="project" value="UniProtKB"/>
</dbReference>
<dbReference type="GO" id="GO:1904868">
    <property type="term" value="P:telomerase catalytic core complex assembly"/>
    <property type="evidence" value="ECO:0000314"/>
    <property type="project" value="UniProtKB"/>
</dbReference>
<dbReference type="GO" id="GO:0090669">
    <property type="term" value="P:telomerase RNA stabilization"/>
    <property type="evidence" value="ECO:0000314"/>
    <property type="project" value="UniProtKB"/>
</dbReference>
<dbReference type="GO" id="GO:0007004">
    <property type="term" value="P:telomere maintenance via telomerase"/>
    <property type="evidence" value="ECO:0000314"/>
    <property type="project" value="UniProtKB"/>
</dbReference>
<dbReference type="CDD" id="cd12456">
    <property type="entry name" value="RRM_p65"/>
    <property type="match status" value="1"/>
</dbReference>
<dbReference type="CDD" id="cd00590">
    <property type="entry name" value="RRM_SF"/>
    <property type="match status" value="1"/>
</dbReference>
<dbReference type="Gene3D" id="3.30.70.330">
    <property type="match status" value="3"/>
</dbReference>
<dbReference type="Gene3D" id="1.10.10.10">
    <property type="entry name" value="Winged helix-like DNA-binding domain superfamily/Winged helix DNA-binding domain"/>
    <property type="match status" value="1"/>
</dbReference>
<dbReference type="InterPro" id="IPR045180">
    <property type="entry name" value="La_dom_prot"/>
</dbReference>
<dbReference type="InterPro" id="IPR006630">
    <property type="entry name" value="La_HTH"/>
</dbReference>
<dbReference type="InterPro" id="IPR014886">
    <property type="entry name" value="La_xRRM"/>
</dbReference>
<dbReference type="InterPro" id="IPR012677">
    <property type="entry name" value="Nucleotide-bd_a/b_plait_sf"/>
</dbReference>
<dbReference type="InterPro" id="IPR035979">
    <property type="entry name" value="RBD_domain_sf"/>
</dbReference>
<dbReference type="InterPro" id="IPR000504">
    <property type="entry name" value="RRM_dom"/>
</dbReference>
<dbReference type="InterPro" id="IPR036388">
    <property type="entry name" value="WH-like_DNA-bd_sf"/>
</dbReference>
<dbReference type="InterPro" id="IPR036390">
    <property type="entry name" value="WH_DNA-bd_sf"/>
</dbReference>
<dbReference type="PANTHER" id="PTHR22792:SF62">
    <property type="entry name" value="LA-RELATED PROTEIN 7"/>
    <property type="match status" value="1"/>
</dbReference>
<dbReference type="PANTHER" id="PTHR22792">
    <property type="entry name" value="LUPUS LA PROTEIN-RELATED"/>
    <property type="match status" value="1"/>
</dbReference>
<dbReference type="Pfam" id="PF05383">
    <property type="entry name" value="La"/>
    <property type="match status" value="1"/>
</dbReference>
<dbReference type="Pfam" id="PF00076">
    <property type="entry name" value="RRM_1"/>
    <property type="match status" value="1"/>
</dbReference>
<dbReference type="SMART" id="SM00715">
    <property type="entry name" value="LA"/>
    <property type="match status" value="1"/>
</dbReference>
<dbReference type="SMART" id="SM00360">
    <property type="entry name" value="RRM"/>
    <property type="match status" value="1"/>
</dbReference>
<dbReference type="SUPFAM" id="SSF54928">
    <property type="entry name" value="RNA-binding domain, RBD"/>
    <property type="match status" value="1"/>
</dbReference>
<dbReference type="SUPFAM" id="SSF46785">
    <property type="entry name" value="Winged helix' DNA-binding domain"/>
    <property type="match status" value="1"/>
</dbReference>
<dbReference type="PROSITE" id="PS50961">
    <property type="entry name" value="HTH_LA"/>
    <property type="match status" value="1"/>
</dbReference>
<dbReference type="PROSITE" id="PS50102">
    <property type="entry name" value="RRM"/>
    <property type="match status" value="1"/>
</dbReference>
<dbReference type="PROSITE" id="PS51939">
    <property type="entry name" value="XRRM"/>
    <property type="match status" value="1"/>
</dbReference>
<feature type="chain" id="PRO_0000449907" description="La-related protein 7 homolog">
    <location>
        <begin position="1"/>
        <end position="542"/>
    </location>
</feature>
<feature type="domain" description="HTH La-type RNA-binding" evidence="2">
    <location>
        <begin position="112"/>
        <end position="239"/>
    </location>
</feature>
<feature type="domain" description="RRM" evidence="1">
    <location>
        <begin position="247"/>
        <end position="335"/>
    </location>
</feature>
<feature type="domain" description="xRRM" evidence="3 17">
    <location>
        <begin position="374"/>
        <end position="542"/>
    </location>
</feature>
<feature type="mutagenesis site" description="Decreased binding to TER RNA stem-loop IV." evidence="11">
    <original>Y</original>
    <variation>A</variation>
    <location>
        <position position="407"/>
    </location>
</feature>
<feature type="mutagenesis site" description="Decreased binding to TER RNA stem-loop IV." evidence="11">
    <original>R</original>
    <variation>A</variation>
    <location>
        <position position="465"/>
    </location>
</feature>
<feature type="helix" evidence="25">
    <location>
        <begin position="116"/>
        <end position="129"/>
    </location>
</feature>
<feature type="helix" evidence="25">
    <location>
        <begin position="132"/>
        <end position="138"/>
    </location>
</feature>
<feature type="helix" evidence="25">
    <location>
        <begin position="142"/>
        <end position="147"/>
    </location>
</feature>
<feature type="strand" evidence="25">
    <location>
        <begin position="148"/>
        <end position="151"/>
    </location>
</feature>
<feature type="helix" evidence="25">
    <location>
        <begin position="158"/>
        <end position="160"/>
    </location>
</feature>
<feature type="helix" evidence="25">
    <location>
        <begin position="163"/>
        <end position="166"/>
    </location>
</feature>
<feature type="helix" evidence="25">
    <location>
        <begin position="203"/>
        <end position="215"/>
    </location>
</feature>
<feature type="strand" evidence="25">
    <location>
        <begin position="218"/>
        <end position="221"/>
    </location>
</feature>
<feature type="strand" evidence="25">
    <location>
        <begin position="229"/>
        <end position="233"/>
    </location>
</feature>
<feature type="strand" evidence="24">
    <location>
        <begin position="380"/>
        <end position="384"/>
    </location>
</feature>
<feature type="helix" evidence="24">
    <location>
        <begin position="392"/>
        <end position="400"/>
    </location>
</feature>
<feature type="turn" evidence="23">
    <location>
        <begin position="401"/>
        <end position="403"/>
    </location>
</feature>
<feature type="strand" evidence="24">
    <location>
        <begin position="406"/>
        <end position="410"/>
    </location>
</feature>
<feature type="turn" evidence="23">
    <location>
        <begin position="453"/>
        <end position="456"/>
    </location>
</feature>
<feature type="strand" evidence="24">
    <location>
        <begin position="462"/>
        <end position="468"/>
    </location>
</feature>
<feature type="helix" evidence="24">
    <location>
        <begin position="469"/>
        <end position="479"/>
    </location>
</feature>
<feature type="turn" evidence="24">
    <location>
        <begin position="482"/>
        <end position="485"/>
    </location>
</feature>
<feature type="strand" evidence="24">
    <location>
        <begin position="486"/>
        <end position="491"/>
    </location>
</feature>
<feature type="strand" evidence="24">
    <location>
        <begin position="494"/>
        <end position="499"/>
    </location>
</feature>
<feature type="helix" evidence="24">
    <location>
        <begin position="504"/>
        <end position="517"/>
    </location>
</feature>
<keyword id="KW-0002">3D-structure</keyword>
<keyword id="KW-0158">Chromosome</keyword>
<keyword id="KW-1185">Reference proteome</keyword>
<keyword id="KW-0694">RNA-binding</keyword>
<keyword id="KW-0779">Telomere</keyword>
<reference key="1">
    <citation type="journal article" date="2004" name="Genes Dev.">
        <title>Holoenzyme proteins required for the physiological assembly and activity of telomerase.</title>
        <authorList>
            <person name="Witkin K.L."/>
            <person name="Collins K."/>
        </authorList>
    </citation>
    <scope>NUCLEOTIDE SEQUENCE [GENOMIC DNA]</scope>
    <scope>FUNCTION</scope>
    <scope>RNA-BINDING</scope>
    <scope>DISRUPTION PHENOTYPE</scope>
</reference>
<reference key="2">
    <citation type="journal article" date="2006" name="PLoS Biol.">
        <title>Macronuclear genome sequence of the ciliate Tetrahymena thermophila, a model eukaryote.</title>
        <authorList>
            <person name="Eisen J.A."/>
            <person name="Coyne R.S."/>
            <person name="Wu M."/>
            <person name="Wu D."/>
            <person name="Thiagarajan M."/>
            <person name="Wortman J.R."/>
            <person name="Badger J.H."/>
            <person name="Ren Q."/>
            <person name="Amedeo P."/>
            <person name="Jones K.M."/>
            <person name="Tallon L.J."/>
            <person name="Delcher A.L."/>
            <person name="Salzberg S.L."/>
            <person name="Silva J.C."/>
            <person name="Haas B.J."/>
            <person name="Majoros W.H."/>
            <person name="Farzad M."/>
            <person name="Carlton J.M."/>
            <person name="Smith R.K. Jr."/>
            <person name="Garg J."/>
            <person name="Pearlman R.E."/>
            <person name="Karrer K.M."/>
            <person name="Sun L."/>
            <person name="Manning G."/>
            <person name="Elde N.C."/>
            <person name="Turkewitz A.P."/>
            <person name="Asai D.J."/>
            <person name="Wilkes D.E."/>
            <person name="Wang Y."/>
            <person name="Cai H."/>
            <person name="Collins K."/>
            <person name="Stewart B.A."/>
            <person name="Lee S.R."/>
            <person name="Wilamowska K."/>
            <person name="Weinberg Z."/>
            <person name="Ruzzo W.L."/>
            <person name="Wloga D."/>
            <person name="Gaertig J."/>
            <person name="Frankel J."/>
            <person name="Tsao C.-C."/>
            <person name="Gorovsky M.A."/>
            <person name="Keeling P.J."/>
            <person name="Waller R.F."/>
            <person name="Patron N.J."/>
            <person name="Cherry J.M."/>
            <person name="Stover N.A."/>
            <person name="Krieger C.J."/>
            <person name="del Toro C."/>
            <person name="Ryder H.F."/>
            <person name="Williamson S.C."/>
            <person name="Barbeau R.A."/>
            <person name="Hamilton E.P."/>
            <person name="Orias E."/>
        </authorList>
    </citation>
    <scope>NUCLEOTIDE SEQUENCE [LARGE SCALE GENOMIC DNA]</scope>
    <source>
        <strain>SB210</strain>
    </source>
</reference>
<reference key="3">
    <citation type="journal article" date="2005" name="Nat. Struct. Mol. Biol.">
        <title>A telomerase holoenzyme protein enhances telomerase RNA assembly with telomerase reverse transcriptase.</title>
        <authorList>
            <person name="Prathapam R."/>
            <person name="Witkin K.L."/>
            <person name="O'Connor C.M."/>
            <person name="Collins K."/>
        </authorList>
    </citation>
    <scope>FUNCTION</scope>
    <scope>RNA-BINDING</scope>
    <scope>IDENTIFICATION IN THE TELOMERASE HOLOENZYME COMPLEX</scope>
</reference>
<reference key="4">
    <citation type="journal article" date="2006" name="Mol. Cell. Biol.">
        <title>A novel RNA binding domain in tetrahymena telomerase p65 initiates hierarchical assembly of telomerase holoenzyme.</title>
        <authorList>
            <person name="O'Connor C.M."/>
            <person name="Collins K."/>
        </authorList>
    </citation>
    <scope>FUNCTION</scope>
    <scope>RNA-BINDING</scope>
</reference>
<reference key="5">
    <citation type="journal article" date="2007" name="Nature">
        <title>Stepwise protein-mediated RNA folding directs assembly of telomerase ribonucleoprotein.</title>
        <authorList>
            <person name="Stone M.D."/>
            <person name="Mihalusova M."/>
            <person name="O'connor C.M."/>
            <person name="Prathapam R."/>
            <person name="Collins K."/>
            <person name="Zhuang X."/>
        </authorList>
    </citation>
    <scope>FUNCTION</scope>
    <scope>RNA-BINDING</scope>
    <scope>IDENTIFICATION IN THE TELOMERASE HOLOENZYME COMPLEX</scope>
</reference>
<reference key="6">
    <citation type="journal article" date="2010" name="Mol. Cell. Biol.">
        <title>Tetrahymena telomerase protein p65 induces conformational changes throughout telomerase RNA (TER) and rescues telomerase reverse transcriptase and TER assembly mutants.</title>
        <authorList>
            <person name="Berman A.J."/>
            <person name="Gooding A.R."/>
            <person name="Cech T.R."/>
        </authorList>
    </citation>
    <scope>FUNCTION</scope>
    <scope>RNA-BINDING</scope>
    <scope>IDENTIFICATION IN THE TELOMERASE HOLOENZYME COMPLEX</scope>
</reference>
<reference key="7">
    <citation type="journal article" date="2012" name="RNA">
        <title>The C-terminal domain of Tetrahymena thermophila telomerase holoenzyme protein p65 induces multiple structural changes in telomerase RNA.</title>
        <authorList>
            <person name="Akiyama B.M."/>
            <person name="Loper J."/>
            <person name="Najarro K."/>
            <person name="Stone M.D."/>
        </authorList>
    </citation>
    <scope>FUNCTION</scope>
    <scope>RNA-BINDING</scope>
</reference>
<reference key="8">
    <citation type="journal article" date="2009" name="Mol. Cell">
        <title>An RPA-related sequence-specific DNA-binding subunit of telomerase holoenzyme is required for elongation processivity and telomere maintenance.</title>
        <authorList>
            <person name="Min B."/>
            <person name="Collins K."/>
        </authorList>
    </citation>
    <scope>IDENTIFICATION IN THE TELOMERASE HOLOENZYME</scope>
</reference>
<reference evidence="19 20 21" key="9">
    <citation type="journal article" date="2012" name="Mol. Cell">
        <title>Structural basis for telomerase RNA recognition and RNP assembly by the holoenzyme La family protein p65.</title>
        <authorList>
            <person name="Singh M."/>
            <person name="Wang Z."/>
            <person name="Koo B.K."/>
            <person name="Patel A."/>
            <person name="Cascio D."/>
            <person name="Collins K."/>
            <person name="Feigon J."/>
        </authorList>
    </citation>
    <scope>X-RAY CRYSTALLOGRAPHY (2.50 ANGSTROMS) OF 375-542 IN COMPLEX WITH TER RNA</scope>
    <scope>FUNCTION</scope>
    <scope>RNA-BINDING</scope>
    <scope>DOMAIN</scope>
    <scope>MUTAGENESIS OF TYR-407 AND ARG-465</scope>
</reference>
<reference key="10">
    <citation type="journal article" date="2013" name="Nature">
        <title>The architecture of Tetrahymena telomerase holoenzyme.</title>
        <authorList>
            <person name="Jiang J."/>
            <person name="Miracco E.J."/>
            <person name="Hong K."/>
            <person name="Eckert B."/>
            <person name="Chan H."/>
            <person name="Cash D.D."/>
            <person name="Min B."/>
            <person name="Zhou Z.H."/>
            <person name="Collins K."/>
            <person name="Feigon J."/>
        </authorList>
    </citation>
    <scope>STRUCTURE BY ELECTRON MICROSCOPY OF THE TELOMERASE HOLOENZYME</scope>
</reference>
<reference key="11">
    <citation type="journal article" date="2015" name="Science">
        <title>Structure of Tetrahymena telomerase reveals previously unknown subunits, functions, and interactions.</title>
        <authorList>
            <person name="Jiang J."/>
            <person name="Chan H."/>
            <person name="Cash D.D."/>
            <person name="Miracco E.J."/>
            <person name="Ogorzalek Loo R.R."/>
            <person name="Upton H.E."/>
            <person name="Cascio D."/>
            <person name="O'Brien Johnson R."/>
            <person name="Collins K."/>
            <person name="Loo J.A."/>
            <person name="Zhou Z.H."/>
            <person name="Feigon J."/>
        </authorList>
    </citation>
    <scope>STRUCTURE BY ELECTRON MICROSCOPY OF THE TELOMERASE HOLOENZYME</scope>
</reference>
<reference evidence="22" key="12">
    <citation type="journal article" date="2018" name="Cell">
        <title>Structure of telomerase with telomeric DNA.</title>
        <authorList>
            <person name="Jiang J."/>
            <person name="Wang Y."/>
            <person name="Susac L."/>
            <person name="Chan H."/>
            <person name="Basu R."/>
            <person name="Zhou Z.H."/>
            <person name="Feigon J."/>
        </authorList>
    </citation>
    <scope>STRUCTURE BY ELECTRON MICROSCOPY (4.80 ANGSTROMS) OF THE TELOMERASE HOLOENZYME IN COMPLEX WITH TELOMERIC DNA AND TER RNA</scope>
</reference>
<comment type="function">
    <text evidence="4 5 6 7 9 10 11">RNA-binding protein required for assembly of the holoenzyme telomerase ribonucleoprotein (RNP) complex (PubMed:15131081, PubMed:15696174, PubMed:16507983, PubMed:17322903, PubMed:20713447, PubMed:22315458, PubMed:22705372). Telomerase is an essential ribonucleoprotein enzyme that copies new telomeric repeats onto chromosome ends by repetitively synthesizing the short telomere-repeat sequence 5'-TTGGGG-3' using an RNA template component TER (PubMed:15696174, PubMed:17322903, PubMed:20713447). TAP65/p65 specifically binds telomerase RNA template TER and is required for biogenesis and placement of the TER stem-terminus element: TAP65/p65 first protects the 3'-end of TER from degradation and acts as a chaperone to correctly fold TER for protein binding; it then bends TER stem-loop IV to position it for interaction of stem-loop IV with catalytic TERT RNA-binding domain (PubMed:15696174, PubMed:17322903, PubMed:20713447, PubMed:22315458, PubMed:22705372).</text>
</comment>
<comment type="subunit">
    <text evidence="5 7 8 9 11 12 13 14">Component of the telomerase holoenzyme complex, composed of the catalytic core (the catalytic subunit TERT, the telomerase RNA template component TER and TAP65/p65), which is associated with two heterotrimeric subcomplexes: (i) the replication protein A (RPA)-related subcomplex, composed of TEB1, RPA2/TEB2 and RPA3/TEB3 and (ii) the CST-like subcomplex, composed of TAP75/p75, TAP45/p45 and TAP19/p19 (PubMed:15696174, PubMed:17322903, PubMed:19941821, PubMed:20713447, PubMed:22705372, PubMed:23552895, PubMed:26472759, PubMed:29775593). TEB1 and the CST-like subcomplex are tethered to the catalytic core by TAP50/p50 (PubMed:19941821, PubMed:23552895, PubMed:26472759, PubMed:29775593).</text>
</comment>
<comment type="subcellular location">
    <subcellularLocation>
        <location evidence="16">Chromosome</location>
        <location evidence="16">Telomere</location>
    </subcellularLocation>
</comment>
<comment type="domain">
    <text evidence="11">The HTH La-type RNA-binding and RRM domains cooperatively bind to TER RNA UUU-3'OH sequence after it is transcribed by Polymerase III (PubMed:22705372). UUU-3'OH-binding by the HTH La-type RNA-binding and RRM domains positions the xRRM domain to bind to the adjacent proximal stem-loop IV and central dinucleotide GA bulge (PubMed:22705372).</text>
</comment>
<comment type="disruption phenotype">
    <text evidence="4">Critically short telomeres (PubMed:15131081). Reduced accumulation of telomerase RNA TER (PubMed:15131081).</text>
</comment>
<comment type="similarity">
    <text evidence="16">Belongs to the LARP7 family.</text>
</comment>
<accession>W7X6T2</accession>
<accession>Q6JXI6</accession>
<gene>
    <name evidence="15" type="primary">TAP65</name>
    <name evidence="18" type="ORF">TTHERM_000318539</name>
</gene>
<sequence>MDEYLENTNLEELEQECFMEDYQHEDVVEQENHQVDANDIYENQQMNDESQLNQDVKISQQKEQAVEMIEEQQQNNQDKFKQFQDCMAHITELNFKRNYQNLTEQSSSNNVVAEELDIKESLKLQMEYYFCDTNLTHDSYLRGIISKSPKNCVDIKVFLKFNKIQQILKQIQDKQIVSTYGIENQSQKKNHKNYKNQNATFSKKDLIHLIRDSLKESKILKVKMDSLKVKRRFPFNLEQALKNSKQRTLYIDFLPPKCSKQTLVSIFGNFRIININLPLQKNSQLCQGFAFIEFFSEEEANQALITKNSSIPKELILLTEKKIGQGSIRIITYKKWQEEKQSFKELSKNQNEQKNKNMNQSRKASDEFVSIDVEIKQNCLIKIINIPQGTLKAEVVLAVRHLGYEFYCDYIDENSNQINSNKISLSTQQQNTAQCSNIQIENNLIQQDQHPQLNDLLKEGQAMIRFQNSDEQRLAIQKLLNHNNNKLQIEIRGQICDVISTIPEDEEKNYWNYIKFKKNEFRKFFFMKKQQKKQNITQNYNK</sequence>